<accession>Q9Y7S2</accession>
<protein>
    <recommendedName>
        <fullName>UPF0612 protein C569.003</fullName>
    </recommendedName>
</protein>
<comment type="subcellular location">
    <subcellularLocation>
        <location evidence="1">Cytoplasm</location>
    </subcellularLocation>
</comment>
<comment type="similarity">
    <text evidence="2">Belongs to the UPF0612 family.</text>
</comment>
<proteinExistence type="inferred from homology"/>
<keyword id="KW-0963">Cytoplasm</keyword>
<keyword id="KW-1185">Reference proteome</keyword>
<gene>
    <name type="ORF">SPCC569.03</name>
</gene>
<name>YQO3_SCHPO</name>
<evidence type="ECO:0000269" key="1">
    <source>
    </source>
</evidence>
<evidence type="ECO:0000305" key="2"/>
<sequence>MTSNENFENGFDLPPPDDSAEDLKLFIKKFERSLNSALLEFDENNQETIENFRQAKEHKMRFETECDQKLRNWKRLAIEREVSEEQSGEVQFPRWIDEWANTKLGGIFERIFSKMDSMQNDMNSRFDAMQTEMSVMKNGIASIKGEMAEMKGEMTVMKNDIASIKGEMAEMKGEMAVMKNDIASIKGEMAEMKGEMTVMKNDIASIKGEMAEMKGEMTIMKSDIDSVKGETTTLKGEVTAMKDSISQLDRKIDLLDQRTEERFNNMAQTMQKIDDRSCKSMMLTRKYENMVRSDMHYSAVPVPFLNGDEPRDYELPPLASFEDIDNLTKEQCIQYLHGYGVNKFSPLETVKLKERLQEAIGLWSKGHESHKYHTF</sequence>
<dbReference type="EMBL" id="CU329672">
    <property type="protein sequence ID" value="CAB42064.2"/>
    <property type="molecule type" value="Genomic_DNA"/>
</dbReference>
<dbReference type="PIR" id="T41405">
    <property type="entry name" value="T41405"/>
</dbReference>
<dbReference type="RefSeq" id="NP_588570.2">
    <property type="nucleotide sequence ID" value="NM_001023557.2"/>
</dbReference>
<dbReference type="SMR" id="Q9Y7S2"/>
<dbReference type="BioGRID" id="275534">
    <property type="interactions" value="1"/>
</dbReference>
<dbReference type="STRING" id="284812.Q9Y7S2"/>
<dbReference type="PaxDb" id="4896-SPCC569.03.1"/>
<dbReference type="EnsemblFungi" id="SPCC569.03.1">
    <property type="protein sequence ID" value="SPCC569.03.1:pep"/>
    <property type="gene ID" value="SPCC569.03"/>
</dbReference>
<dbReference type="KEGG" id="spo:2538960"/>
<dbReference type="PomBase" id="SPCC569.03"/>
<dbReference type="VEuPathDB" id="FungiDB:SPCC569.03"/>
<dbReference type="eggNOG" id="ENOG502QQXV">
    <property type="taxonomic scope" value="Eukaryota"/>
</dbReference>
<dbReference type="HOGENOM" id="CLU_062677_0_0_1"/>
<dbReference type="InParanoid" id="Q9Y7S2"/>
<dbReference type="PRO" id="PR:Q9Y7S2"/>
<dbReference type="Proteomes" id="UP000002485">
    <property type="component" value="Chromosome III"/>
</dbReference>
<dbReference type="GO" id="GO:0005829">
    <property type="term" value="C:cytosol"/>
    <property type="evidence" value="ECO:0007005"/>
    <property type="project" value="PomBase"/>
</dbReference>
<dbReference type="FunFam" id="1.20.5.170:FF:000246">
    <property type="entry name" value="UPF0612 protein C569.003"/>
    <property type="match status" value="2"/>
</dbReference>
<dbReference type="Gene3D" id="1.20.5.170">
    <property type="match status" value="1"/>
</dbReference>
<dbReference type="Gene3D" id="1.20.5.190">
    <property type="match status" value="2"/>
</dbReference>
<dbReference type="InterPro" id="IPR013902">
    <property type="entry name" value="Mug135-like_C"/>
</dbReference>
<dbReference type="Pfam" id="PF08593">
    <property type="entry name" value="Mug135_C"/>
    <property type="match status" value="1"/>
</dbReference>
<dbReference type="SUPFAM" id="SSF58100">
    <property type="entry name" value="Bacterial hemolysins"/>
    <property type="match status" value="1"/>
</dbReference>
<reference key="1">
    <citation type="journal article" date="2002" name="Nature">
        <title>The genome sequence of Schizosaccharomyces pombe.</title>
        <authorList>
            <person name="Wood V."/>
            <person name="Gwilliam R."/>
            <person name="Rajandream M.A."/>
            <person name="Lyne M.H."/>
            <person name="Lyne R."/>
            <person name="Stewart A."/>
            <person name="Sgouros J.G."/>
            <person name="Peat N."/>
            <person name="Hayles J."/>
            <person name="Baker S.G."/>
            <person name="Basham D."/>
            <person name="Bowman S."/>
            <person name="Brooks K."/>
            <person name="Brown D."/>
            <person name="Brown S."/>
            <person name="Chillingworth T."/>
            <person name="Churcher C.M."/>
            <person name="Collins M."/>
            <person name="Connor R."/>
            <person name="Cronin A."/>
            <person name="Davis P."/>
            <person name="Feltwell T."/>
            <person name="Fraser A."/>
            <person name="Gentles S."/>
            <person name="Goble A."/>
            <person name="Hamlin N."/>
            <person name="Harris D.E."/>
            <person name="Hidalgo J."/>
            <person name="Hodgson G."/>
            <person name="Holroyd S."/>
            <person name="Hornsby T."/>
            <person name="Howarth S."/>
            <person name="Huckle E.J."/>
            <person name="Hunt S."/>
            <person name="Jagels K."/>
            <person name="James K.D."/>
            <person name="Jones L."/>
            <person name="Jones M."/>
            <person name="Leather S."/>
            <person name="McDonald S."/>
            <person name="McLean J."/>
            <person name="Mooney P."/>
            <person name="Moule S."/>
            <person name="Mungall K.L."/>
            <person name="Murphy L.D."/>
            <person name="Niblett D."/>
            <person name="Odell C."/>
            <person name="Oliver K."/>
            <person name="O'Neil S."/>
            <person name="Pearson D."/>
            <person name="Quail M.A."/>
            <person name="Rabbinowitsch E."/>
            <person name="Rutherford K.M."/>
            <person name="Rutter S."/>
            <person name="Saunders D."/>
            <person name="Seeger K."/>
            <person name="Sharp S."/>
            <person name="Skelton J."/>
            <person name="Simmonds M.N."/>
            <person name="Squares R."/>
            <person name="Squares S."/>
            <person name="Stevens K."/>
            <person name="Taylor K."/>
            <person name="Taylor R.G."/>
            <person name="Tivey A."/>
            <person name="Walsh S.V."/>
            <person name="Warren T."/>
            <person name="Whitehead S."/>
            <person name="Woodward J.R."/>
            <person name="Volckaert G."/>
            <person name="Aert R."/>
            <person name="Robben J."/>
            <person name="Grymonprez B."/>
            <person name="Weltjens I."/>
            <person name="Vanstreels E."/>
            <person name="Rieger M."/>
            <person name="Schaefer M."/>
            <person name="Mueller-Auer S."/>
            <person name="Gabel C."/>
            <person name="Fuchs M."/>
            <person name="Duesterhoeft A."/>
            <person name="Fritzc C."/>
            <person name="Holzer E."/>
            <person name="Moestl D."/>
            <person name="Hilbert H."/>
            <person name="Borzym K."/>
            <person name="Langer I."/>
            <person name="Beck A."/>
            <person name="Lehrach H."/>
            <person name="Reinhardt R."/>
            <person name="Pohl T.M."/>
            <person name="Eger P."/>
            <person name="Zimmermann W."/>
            <person name="Wedler H."/>
            <person name="Wambutt R."/>
            <person name="Purnelle B."/>
            <person name="Goffeau A."/>
            <person name="Cadieu E."/>
            <person name="Dreano S."/>
            <person name="Gloux S."/>
            <person name="Lelaure V."/>
            <person name="Mottier S."/>
            <person name="Galibert F."/>
            <person name="Aves S.J."/>
            <person name="Xiang Z."/>
            <person name="Hunt C."/>
            <person name="Moore K."/>
            <person name="Hurst S.M."/>
            <person name="Lucas M."/>
            <person name="Rochet M."/>
            <person name="Gaillardin C."/>
            <person name="Tallada V.A."/>
            <person name="Garzon A."/>
            <person name="Thode G."/>
            <person name="Daga R.R."/>
            <person name="Cruzado L."/>
            <person name="Jimenez J."/>
            <person name="Sanchez M."/>
            <person name="del Rey F."/>
            <person name="Benito J."/>
            <person name="Dominguez A."/>
            <person name="Revuelta J.L."/>
            <person name="Moreno S."/>
            <person name="Armstrong J."/>
            <person name="Forsburg S.L."/>
            <person name="Cerutti L."/>
            <person name="Lowe T."/>
            <person name="McCombie W.R."/>
            <person name="Paulsen I."/>
            <person name="Potashkin J."/>
            <person name="Shpakovski G.V."/>
            <person name="Ussery D."/>
            <person name="Barrell B.G."/>
            <person name="Nurse P."/>
        </authorList>
    </citation>
    <scope>NUCLEOTIDE SEQUENCE [LARGE SCALE GENOMIC DNA]</scope>
    <source>
        <strain>972 / ATCC 24843</strain>
    </source>
</reference>
<reference key="2">
    <citation type="journal article" date="2011" name="Science">
        <title>Comparative functional genomics of the fission yeasts.</title>
        <authorList>
            <person name="Rhind N."/>
            <person name="Chen Z."/>
            <person name="Yassour M."/>
            <person name="Thompson D.A."/>
            <person name="Haas B.J."/>
            <person name="Habib N."/>
            <person name="Wapinski I."/>
            <person name="Roy S."/>
            <person name="Lin M.F."/>
            <person name="Heiman D.I."/>
            <person name="Young S.K."/>
            <person name="Furuya K."/>
            <person name="Guo Y."/>
            <person name="Pidoux A."/>
            <person name="Chen H.M."/>
            <person name="Robbertse B."/>
            <person name="Goldberg J.M."/>
            <person name="Aoki K."/>
            <person name="Bayne E.H."/>
            <person name="Berlin A.M."/>
            <person name="Desjardins C.A."/>
            <person name="Dobbs E."/>
            <person name="Dukaj L."/>
            <person name="Fan L."/>
            <person name="FitzGerald M.G."/>
            <person name="French C."/>
            <person name="Gujja S."/>
            <person name="Hansen K."/>
            <person name="Keifenheim D."/>
            <person name="Levin J.Z."/>
            <person name="Mosher R.A."/>
            <person name="Mueller C.A."/>
            <person name="Pfiffner J."/>
            <person name="Priest M."/>
            <person name="Russ C."/>
            <person name="Smialowska A."/>
            <person name="Swoboda P."/>
            <person name="Sykes S.M."/>
            <person name="Vaughn M."/>
            <person name="Vengrova S."/>
            <person name="Yoder R."/>
            <person name="Zeng Q."/>
            <person name="Allshire R."/>
            <person name="Baulcombe D."/>
            <person name="Birren B.W."/>
            <person name="Brown W."/>
            <person name="Ekwall K."/>
            <person name="Kellis M."/>
            <person name="Leatherwood J."/>
            <person name="Levin H."/>
            <person name="Margalit H."/>
            <person name="Martienssen R."/>
            <person name="Nieduszynski C.A."/>
            <person name="Spatafora J.W."/>
            <person name="Friedman N."/>
            <person name="Dalgaard J.Z."/>
            <person name="Baumann P."/>
            <person name="Niki H."/>
            <person name="Regev A."/>
            <person name="Nusbaum C."/>
        </authorList>
    </citation>
    <scope>REVISION OF GENE MODEL</scope>
</reference>
<reference key="3">
    <citation type="journal article" date="2006" name="Nat. Biotechnol.">
        <title>ORFeome cloning and global analysis of protein localization in the fission yeast Schizosaccharomyces pombe.</title>
        <authorList>
            <person name="Matsuyama A."/>
            <person name="Arai R."/>
            <person name="Yashiroda Y."/>
            <person name="Shirai A."/>
            <person name="Kamata A."/>
            <person name="Sekido S."/>
            <person name="Kobayashi Y."/>
            <person name="Hashimoto A."/>
            <person name="Hamamoto M."/>
            <person name="Hiraoka Y."/>
            <person name="Horinouchi S."/>
            <person name="Yoshida M."/>
        </authorList>
    </citation>
    <scope>SUBCELLULAR LOCATION [LARGE SCALE ANALYSIS]</scope>
</reference>
<organism>
    <name type="scientific">Schizosaccharomyces pombe (strain 972 / ATCC 24843)</name>
    <name type="common">Fission yeast</name>
    <dbReference type="NCBI Taxonomy" id="284812"/>
    <lineage>
        <taxon>Eukaryota</taxon>
        <taxon>Fungi</taxon>
        <taxon>Dikarya</taxon>
        <taxon>Ascomycota</taxon>
        <taxon>Taphrinomycotina</taxon>
        <taxon>Schizosaccharomycetes</taxon>
        <taxon>Schizosaccharomycetales</taxon>
        <taxon>Schizosaccharomycetaceae</taxon>
        <taxon>Schizosaccharomyces</taxon>
    </lineage>
</organism>
<feature type="chain" id="PRO_0000372417" description="UPF0612 protein C569.003">
    <location>
        <begin position="1"/>
        <end position="375"/>
    </location>
</feature>